<gene>
    <name type="primary">C</name>
</gene>
<sequence length="263" mass="29594">MHKGTFHMSRLTDTLAAKLEEAGITQAELARRVGQSQQAINNLFAGRAASSMVWRELARELGIDEQEMRQMMTEAGRDPEKVTSLAGLRKYRAVLPSPREPFPIIRQQEHLPRPNATIGEETNMEPRKKKLLPVLGEAVGGEDGEYIFNGSVLDYVDCPPSLENVPNAYAVYIDGESMVPRFRPGETVWVHPTKPPRRGDDVVIQIHPDNEDDGAPPRGFVKEFVGWTANKLVLQQYNPTKKIEFTREQVVSVHPIILAGKYW</sequence>
<organism>
    <name type="scientific">Rhizobium phage 16-3</name>
    <name type="common">Bacteriophage 16-3</name>
    <dbReference type="NCBI Taxonomy" id="10704"/>
    <lineage>
        <taxon>Viruses</taxon>
        <taxon>Duplodnaviria</taxon>
        <taxon>Heunggongvirae</taxon>
        <taxon>Uroviricota</taxon>
        <taxon>Caudoviricetes</taxon>
    </lineage>
</organism>
<protein>
    <recommendedName>
        <fullName>Repressor protein C</fullName>
    </recommendedName>
</protein>
<proteinExistence type="evidence at protein level"/>
<feature type="initiator methionine" description="Removed; by host" evidence="2">
    <location>
        <position position="1"/>
    </location>
</feature>
<feature type="chain" id="PRO_0000149710" description="Repressor protein C">
    <location>
        <begin position="2"/>
        <end position="263"/>
    </location>
</feature>
<feature type="domain" description="HTH cro/C1-type" evidence="1">
    <location>
        <begin position="15"/>
        <end position="68"/>
    </location>
</feature>
<feature type="DNA-binding region" description="H-T-H motif" evidence="1">
    <location>
        <begin position="26"/>
        <end position="45"/>
    </location>
</feature>
<accession>P15238</accession>
<accession>B4UTV5</accession>
<accession>Q9MCD2</accession>
<reference key="1">
    <citation type="journal article" date="1987" name="Nature">
        <title>Related repressor specificity of unrelated phages.</title>
        <authorList>
            <person name="Dallmann G."/>
            <person name="Papp P."/>
            <person name="Orosz L."/>
        </authorList>
    </citation>
    <scope>NUCLEOTIDE SEQUENCE [GENOMIC DNA]</scope>
    <scope>PROTEIN SEQUENCE OF 2-4</scope>
</reference>
<reference key="2">
    <citation type="journal article" date="1999" name="J. Bacteriol.">
        <title>Identification of site-specific recombination genes int and xis of the Rhizobium temperate phage 16-3.</title>
        <authorList>
            <person name="Semsey S."/>
            <person name="Papp I."/>
            <person name="Buzas Z."/>
            <person name="Patthy A."/>
            <person name="Orosz L."/>
            <person name="Papp P.P."/>
        </authorList>
    </citation>
    <scope>SEQUENCE REVISION</scope>
</reference>
<reference key="3">
    <citation type="submission" date="2006-04" db="EMBL/GenBank/DDBJ databases">
        <authorList>
            <person name="Papp P.P."/>
        </authorList>
    </citation>
    <scope>NUCLEOTIDE SEQUENCE [GENOMIC DNA]</scope>
    <scope>SEQUENCE REVISION TO 84</scope>
</reference>
<name>RPC_BP163</name>
<dbReference type="EMBL" id="DQ500118">
    <property type="protein sequence ID" value="ABF71321.1"/>
    <property type="molecule type" value="Genomic_DNA"/>
</dbReference>
<dbReference type="PIR" id="S01612">
    <property type="entry name" value="RPBP16"/>
</dbReference>
<dbReference type="RefSeq" id="YP_002117625.1">
    <property type="nucleotide sequence ID" value="NC_011103.1"/>
</dbReference>
<dbReference type="GeneID" id="6654090"/>
<dbReference type="KEGG" id="vg:6654090"/>
<dbReference type="OrthoDB" id="6912at10239"/>
<dbReference type="Proteomes" id="UP000001729">
    <property type="component" value="Genome"/>
</dbReference>
<dbReference type="GO" id="GO:0003677">
    <property type="term" value="F:DNA binding"/>
    <property type="evidence" value="ECO:0007669"/>
    <property type="project" value="UniProtKB-KW"/>
</dbReference>
<dbReference type="GO" id="GO:0007165">
    <property type="term" value="P:signal transduction"/>
    <property type="evidence" value="ECO:0007669"/>
    <property type="project" value="InterPro"/>
</dbReference>
<dbReference type="CDD" id="cd00093">
    <property type="entry name" value="HTH_XRE"/>
    <property type="match status" value="1"/>
</dbReference>
<dbReference type="CDD" id="cd06529">
    <property type="entry name" value="S24_LexA-like"/>
    <property type="match status" value="1"/>
</dbReference>
<dbReference type="Gene3D" id="1.10.260.40">
    <property type="entry name" value="lambda repressor-like DNA-binding domains"/>
    <property type="match status" value="1"/>
</dbReference>
<dbReference type="Gene3D" id="2.10.109.10">
    <property type="entry name" value="Umud Fragment, subunit A"/>
    <property type="match status" value="1"/>
</dbReference>
<dbReference type="InterPro" id="IPR001387">
    <property type="entry name" value="Cro/C1-type_HTH"/>
</dbReference>
<dbReference type="InterPro" id="IPR000488">
    <property type="entry name" value="Death_dom"/>
</dbReference>
<dbReference type="InterPro" id="IPR010982">
    <property type="entry name" value="Lambda_DNA-bd_dom_sf"/>
</dbReference>
<dbReference type="InterPro" id="IPR039418">
    <property type="entry name" value="LexA-like"/>
</dbReference>
<dbReference type="InterPro" id="IPR036286">
    <property type="entry name" value="LexA/Signal_pep-like_sf"/>
</dbReference>
<dbReference type="InterPro" id="IPR015927">
    <property type="entry name" value="Peptidase_S24_S26A/B/C"/>
</dbReference>
<dbReference type="PANTHER" id="PTHR40661">
    <property type="match status" value="1"/>
</dbReference>
<dbReference type="PANTHER" id="PTHR40661:SF3">
    <property type="entry name" value="FELS-1 PROPHAGE TRANSCRIPTIONAL REGULATOR"/>
    <property type="match status" value="1"/>
</dbReference>
<dbReference type="Pfam" id="PF01381">
    <property type="entry name" value="HTH_3"/>
    <property type="match status" value="1"/>
</dbReference>
<dbReference type="Pfam" id="PF00717">
    <property type="entry name" value="Peptidase_S24"/>
    <property type="match status" value="1"/>
</dbReference>
<dbReference type="SMART" id="SM00530">
    <property type="entry name" value="HTH_XRE"/>
    <property type="match status" value="1"/>
</dbReference>
<dbReference type="SUPFAM" id="SSF47413">
    <property type="entry name" value="lambda repressor-like DNA-binding domains"/>
    <property type="match status" value="1"/>
</dbReference>
<dbReference type="SUPFAM" id="SSF51306">
    <property type="entry name" value="LexA/Signal peptidase"/>
    <property type="match status" value="1"/>
</dbReference>
<dbReference type="PROSITE" id="PS50943">
    <property type="entry name" value="HTH_CROC1"/>
    <property type="match status" value="1"/>
</dbReference>
<organismHost>
    <name type="scientific">Rhizobium meliloti</name>
    <name type="common">Ensifer meliloti</name>
    <name type="synonym">Sinorhizobium meliloti</name>
    <dbReference type="NCBI Taxonomy" id="382"/>
</organismHost>
<evidence type="ECO:0000255" key="1">
    <source>
        <dbReference type="PROSITE-ProRule" id="PRU00257"/>
    </source>
</evidence>
<evidence type="ECO:0000269" key="2">
    <source ref="1"/>
</evidence>
<keyword id="KW-0903">Direct protein sequencing</keyword>
<keyword id="KW-0238">DNA-binding</keyword>
<keyword id="KW-0244">Early protein</keyword>
<keyword id="KW-1185">Reference proteome</keyword>
<keyword id="KW-0678">Repressor</keyword>
<keyword id="KW-0804">Transcription</keyword>
<keyword id="KW-0805">Transcription regulation</keyword>